<dbReference type="EC" id="1.1.1.25" evidence="1"/>
<dbReference type="EMBL" id="BA000031">
    <property type="protein sequence ID" value="BAC61296.1"/>
    <property type="molecule type" value="Genomic_DNA"/>
</dbReference>
<dbReference type="RefSeq" id="NP_799412.1">
    <property type="nucleotide sequence ID" value="NC_004603.1"/>
</dbReference>
<dbReference type="RefSeq" id="WP_005461457.1">
    <property type="nucleotide sequence ID" value="NC_004603.1"/>
</dbReference>
<dbReference type="SMR" id="Q87KE4"/>
<dbReference type="GeneID" id="1190632"/>
<dbReference type="KEGG" id="vpa:VP3033"/>
<dbReference type="PATRIC" id="fig|223926.6.peg.2917"/>
<dbReference type="eggNOG" id="COG0169">
    <property type="taxonomic scope" value="Bacteria"/>
</dbReference>
<dbReference type="HOGENOM" id="CLU_044063_2_1_6"/>
<dbReference type="UniPathway" id="UPA00053">
    <property type="reaction ID" value="UER00087"/>
</dbReference>
<dbReference type="Proteomes" id="UP000002493">
    <property type="component" value="Chromosome 1"/>
</dbReference>
<dbReference type="GO" id="GO:0005829">
    <property type="term" value="C:cytosol"/>
    <property type="evidence" value="ECO:0007669"/>
    <property type="project" value="TreeGrafter"/>
</dbReference>
<dbReference type="GO" id="GO:0050661">
    <property type="term" value="F:NADP binding"/>
    <property type="evidence" value="ECO:0007669"/>
    <property type="project" value="InterPro"/>
</dbReference>
<dbReference type="GO" id="GO:0004764">
    <property type="term" value="F:shikimate 3-dehydrogenase (NADP+) activity"/>
    <property type="evidence" value="ECO:0007669"/>
    <property type="project" value="UniProtKB-UniRule"/>
</dbReference>
<dbReference type="GO" id="GO:0008652">
    <property type="term" value="P:amino acid biosynthetic process"/>
    <property type="evidence" value="ECO:0007669"/>
    <property type="project" value="UniProtKB-KW"/>
</dbReference>
<dbReference type="GO" id="GO:0009073">
    <property type="term" value="P:aromatic amino acid family biosynthetic process"/>
    <property type="evidence" value="ECO:0007669"/>
    <property type="project" value="UniProtKB-KW"/>
</dbReference>
<dbReference type="GO" id="GO:0009423">
    <property type="term" value="P:chorismate biosynthetic process"/>
    <property type="evidence" value="ECO:0007669"/>
    <property type="project" value="UniProtKB-UniRule"/>
</dbReference>
<dbReference type="GO" id="GO:0019632">
    <property type="term" value="P:shikimate metabolic process"/>
    <property type="evidence" value="ECO:0007669"/>
    <property type="project" value="InterPro"/>
</dbReference>
<dbReference type="CDD" id="cd01065">
    <property type="entry name" value="NAD_bind_Shikimate_DH"/>
    <property type="match status" value="1"/>
</dbReference>
<dbReference type="FunFam" id="3.40.50.10860:FF:000006">
    <property type="entry name" value="Shikimate dehydrogenase (NADP(+))"/>
    <property type="match status" value="1"/>
</dbReference>
<dbReference type="FunFam" id="3.40.50.720:FF:000104">
    <property type="entry name" value="Shikimate dehydrogenase (NADP(+))"/>
    <property type="match status" value="1"/>
</dbReference>
<dbReference type="Gene3D" id="3.40.50.10860">
    <property type="entry name" value="Leucine Dehydrogenase, chain A, domain 1"/>
    <property type="match status" value="1"/>
</dbReference>
<dbReference type="Gene3D" id="3.40.50.720">
    <property type="entry name" value="NAD(P)-binding Rossmann-like Domain"/>
    <property type="match status" value="1"/>
</dbReference>
<dbReference type="HAMAP" id="MF_00222">
    <property type="entry name" value="Shikimate_DH_AroE"/>
    <property type="match status" value="1"/>
</dbReference>
<dbReference type="InterPro" id="IPR046346">
    <property type="entry name" value="Aminoacid_DH-like_N_sf"/>
</dbReference>
<dbReference type="InterPro" id="IPR036291">
    <property type="entry name" value="NAD(P)-bd_dom_sf"/>
</dbReference>
<dbReference type="InterPro" id="IPR041121">
    <property type="entry name" value="SDH_C"/>
</dbReference>
<dbReference type="InterPro" id="IPR011342">
    <property type="entry name" value="Shikimate_DH"/>
</dbReference>
<dbReference type="InterPro" id="IPR013708">
    <property type="entry name" value="Shikimate_DH-bd_N"/>
</dbReference>
<dbReference type="InterPro" id="IPR022893">
    <property type="entry name" value="Shikimate_DH_fam"/>
</dbReference>
<dbReference type="InterPro" id="IPR006151">
    <property type="entry name" value="Shikm_DH/Glu-tRNA_Rdtase"/>
</dbReference>
<dbReference type="NCBIfam" id="TIGR00507">
    <property type="entry name" value="aroE"/>
    <property type="match status" value="1"/>
</dbReference>
<dbReference type="NCBIfam" id="NF001310">
    <property type="entry name" value="PRK00258.1-2"/>
    <property type="match status" value="1"/>
</dbReference>
<dbReference type="PANTHER" id="PTHR21089:SF1">
    <property type="entry name" value="BIFUNCTIONAL 3-DEHYDROQUINATE DEHYDRATASE_SHIKIMATE DEHYDROGENASE, CHLOROPLASTIC"/>
    <property type="match status" value="1"/>
</dbReference>
<dbReference type="PANTHER" id="PTHR21089">
    <property type="entry name" value="SHIKIMATE DEHYDROGENASE"/>
    <property type="match status" value="1"/>
</dbReference>
<dbReference type="Pfam" id="PF18317">
    <property type="entry name" value="SDH_C"/>
    <property type="match status" value="1"/>
</dbReference>
<dbReference type="Pfam" id="PF01488">
    <property type="entry name" value="Shikimate_DH"/>
    <property type="match status" value="1"/>
</dbReference>
<dbReference type="Pfam" id="PF08501">
    <property type="entry name" value="Shikimate_dh_N"/>
    <property type="match status" value="1"/>
</dbReference>
<dbReference type="SUPFAM" id="SSF53223">
    <property type="entry name" value="Aminoacid dehydrogenase-like, N-terminal domain"/>
    <property type="match status" value="1"/>
</dbReference>
<dbReference type="SUPFAM" id="SSF51735">
    <property type="entry name" value="NAD(P)-binding Rossmann-fold domains"/>
    <property type="match status" value="1"/>
</dbReference>
<sequence length="277" mass="29765">MTPQIDRYAVFGNPIGHSKSPFIHTLFARQTNQSLTYTAECAPVGGFIEAAKAFFADGGKGCNVTLPFKEDAYQFASRLTERAQLAGAVNTLKKLDDGEIIGDNTDGAGLVQDLLQHQVVLEGARILIIGAGGAARGVIKPLLDQKPTSLTITNRTFSKAEELAELFSVYGPVTAKEMNIVAEEFDIIINSTSASLSGELPAISSSVFAANSTSYDMMYGKGDTTFNQWAKQHGAAHAYDGLGMLVGQAAESFMLWRGLRPGAKQILRELRKNLEGQ</sequence>
<protein>
    <recommendedName>
        <fullName evidence="1">Shikimate dehydrogenase (NADP(+))</fullName>
        <shortName evidence="1">SDH</shortName>
        <ecNumber evidence="1">1.1.1.25</ecNumber>
    </recommendedName>
</protein>
<name>AROE_VIBPA</name>
<comment type="function">
    <text evidence="1">Involved in the biosynthesis of the chorismate, which leads to the biosynthesis of aromatic amino acids. Catalyzes the reversible NADPH linked reduction of 3-dehydroshikimate (DHSA) to yield shikimate (SA).</text>
</comment>
<comment type="catalytic activity">
    <reaction evidence="1">
        <text>shikimate + NADP(+) = 3-dehydroshikimate + NADPH + H(+)</text>
        <dbReference type="Rhea" id="RHEA:17737"/>
        <dbReference type="ChEBI" id="CHEBI:15378"/>
        <dbReference type="ChEBI" id="CHEBI:16630"/>
        <dbReference type="ChEBI" id="CHEBI:36208"/>
        <dbReference type="ChEBI" id="CHEBI:57783"/>
        <dbReference type="ChEBI" id="CHEBI:58349"/>
        <dbReference type="EC" id="1.1.1.25"/>
    </reaction>
</comment>
<comment type="pathway">
    <text evidence="1">Metabolic intermediate biosynthesis; chorismate biosynthesis; chorismate from D-erythrose 4-phosphate and phosphoenolpyruvate: step 4/7.</text>
</comment>
<comment type="subunit">
    <text evidence="1">Homodimer.</text>
</comment>
<comment type="similarity">
    <text evidence="1">Belongs to the shikimate dehydrogenase family.</text>
</comment>
<accession>Q87KE4</accession>
<reference key="1">
    <citation type="journal article" date="2003" name="Lancet">
        <title>Genome sequence of Vibrio parahaemolyticus: a pathogenic mechanism distinct from that of V. cholerae.</title>
        <authorList>
            <person name="Makino K."/>
            <person name="Oshima K."/>
            <person name="Kurokawa K."/>
            <person name="Yokoyama K."/>
            <person name="Uda T."/>
            <person name="Tagomori K."/>
            <person name="Iijima Y."/>
            <person name="Najima M."/>
            <person name="Nakano M."/>
            <person name="Yamashita A."/>
            <person name="Kubota Y."/>
            <person name="Kimura S."/>
            <person name="Yasunaga T."/>
            <person name="Honda T."/>
            <person name="Shinagawa H."/>
            <person name="Hattori M."/>
            <person name="Iida T."/>
        </authorList>
    </citation>
    <scope>NUCLEOTIDE SEQUENCE [LARGE SCALE GENOMIC DNA]</scope>
    <source>
        <strain>RIMD 2210633</strain>
    </source>
</reference>
<keyword id="KW-0028">Amino-acid biosynthesis</keyword>
<keyword id="KW-0057">Aromatic amino acid biosynthesis</keyword>
<keyword id="KW-0521">NADP</keyword>
<keyword id="KW-0560">Oxidoreductase</keyword>
<evidence type="ECO:0000255" key="1">
    <source>
        <dbReference type="HAMAP-Rule" id="MF_00222"/>
    </source>
</evidence>
<organism>
    <name type="scientific">Vibrio parahaemolyticus serotype O3:K6 (strain RIMD 2210633)</name>
    <dbReference type="NCBI Taxonomy" id="223926"/>
    <lineage>
        <taxon>Bacteria</taxon>
        <taxon>Pseudomonadati</taxon>
        <taxon>Pseudomonadota</taxon>
        <taxon>Gammaproteobacteria</taxon>
        <taxon>Vibrionales</taxon>
        <taxon>Vibrionaceae</taxon>
        <taxon>Vibrio</taxon>
    </lineage>
</organism>
<gene>
    <name evidence="1" type="primary">aroE</name>
    <name type="ordered locus">VP3033</name>
</gene>
<proteinExistence type="inferred from homology"/>
<feature type="chain" id="PRO_0000136049" description="Shikimate dehydrogenase (NADP(+))">
    <location>
        <begin position="1"/>
        <end position="277"/>
    </location>
</feature>
<feature type="active site" description="Proton acceptor" evidence="1">
    <location>
        <position position="69"/>
    </location>
</feature>
<feature type="binding site" evidence="1">
    <location>
        <begin position="18"/>
        <end position="20"/>
    </location>
    <ligand>
        <name>shikimate</name>
        <dbReference type="ChEBI" id="CHEBI:36208"/>
    </ligand>
</feature>
<feature type="binding site" evidence="1">
    <location>
        <position position="65"/>
    </location>
    <ligand>
        <name>shikimate</name>
        <dbReference type="ChEBI" id="CHEBI:36208"/>
    </ligand>
</feature>
<feature type="binding site" evidence="1">
    <location>
        <position position="81"/>
    </location>
    <ligand>
        <name>NADP(+)</name>
        <dbReference type="ChEBI" id="CHEBI:58349"/>
    </ligand>
</feature>
<feature type="binding site" evidence="1">
    <location>
        <position position="90"/>
    </location>
    <ligand>
        <name>shikimate</name>
        <dbReference type="ChEBI" id="CHEBI:36208"/>
    </ligand>
</feature>
<feature type="binding site" evidence="1">
    <location>
        <position position="106"/>
    </location>
    <ligand>
        <name>shikimate</name>
        <dbReference type="ChEBI" id="CHEBI:36208"/>
    </ligand>
</feature>
<feature type="binding site" evidence="1">
    <location>
        <begin position="130"/>
        <end position="134"/>
    </location>
    <ligand>
        <name>NADP(+)</name>
        <dbReference type="ChEBI" id="CHEBI:58349"/>
    </ligand>
</feature>
<feature type="binding site" evidence="1">
    <location>
        <begin position="154"/>
        <end position="159"/>
    </location>
    <ligand>
        <name>NADP(+)</name>
        <dbReference type="ChEBI" id="CHEBI:58349"/>
    </ligand>
</feature>
<feature type="binding site" evidence="1">
    <location>
        <position position="217"/>
    </location>
    <ligand>
        <name>NADP(+)</name>
        <dbReference type="ChEBI" id="CHEBI:58349"/>
    </ligand>
</feature>
<feature type="binding site" evidence="1">
    <location>
        <position position="219"/>
    </location>
    <ligand>
        <name>shikimate</name>
        <dbReference type="ChEBI" id="CHEBI:36208"/>
    </ligand>
</feature>
<feature type="binding site" evidence="1">
    <location>
        <position position="241"/>
    </location>
    <ligand>
        <name>NADP(+)</name>
        <dbReference type="ChEBI" id="CHEBI:58349"/>
    </ligand>
</feature>